<proteinExistence type="inferred from homology"/>
<reference key="1">
    <citation type="journal article" date="2006" name="Appl. Environ. Microbiol.">
        <title>Complete genome sequence of the marine, chemolithoautotrophic, ammonia-oxidizing bacterium Nitrosococcus oceani ATCC 19707.</title>
        <authorList>
            <person name="Klotz M.G."/>
            <person name="Arp D.J."/>
            <person name="Chain P.S.G."/>
            <person name="El-Sheikh A.F."/>
            <person name="Hauser L.J."/>
            <person name="Hommes N.G."/>
            <person name="Larimer F.W."/>
            <person name="Malfatti S.A."/>
            <person name="Norton J.M."/>
            <person name="Poret-Peterson A.T."/>
            <person name="Vergez L.M."/>
            <person name="Ward B.B."/>
        </authorList>
    </citation>
    <scope>NUCLEOTIDE SEQUENCE [LARGE SCALE GENOMIC DNA]</scope>
    <source>
        <strain>ATCC 19707 / BCRC 17464 / JCM 30415 / NCIMB 11848 / C-107</strain>
    </source>
</reference>
<gene>
    <name evidence="1" type="primary">glnE</name>
    <name type="ordered locus">Noc_0135</name>
</gene>
<feature type="chain" id="PRO_1000148544" description="Bifunctional glutamine synthetase adenylyltransferase/adenylyl-removing enzyme">
    <location>
        <begin position="1"/>
        <end position="969"/>
    </location>
</feature>
<feature type="region of interest" description="Adenylyl removase" evidence="1">
    <location>
        <begin position="1"/>
        <end position="456"/>
    </location>
</feature>
<feature type="region of interest" description="Adenylyl transferase" evidence="1">
    <location>
        <begin position="466"/>
        <end position="969"/>
    </location>
</feature>
<accession>Q3JES8</accession>
<keyword id="KW-0067">ATP-binding</keyword>
<keyword id="KW-0460">Magnesium</keyword>
<keyword id="KW-0511">Multifunctional enzyme</keyword>
<keyword id="KW-0547">Nucleotide-binding</keyword>
<keyword id="KW-0548">Nucleotidyltransferase</keyword>
<keyword id="KW-1185">Reference proteome</keyword>
<keyword id="KW-0808">Transferase</keyword>
<protein>
    <recommendedName>
        <fullName evidence="1">Bifunctional glutamine synthetase adenylyltransferase/adenylyl-removing enzyme</fullName>
    </recommendedName>
    <alternativeName>
        <fullName evidence="1">ATP:glutamine synthetase adenylyltransferase</fullName>
    </alternativeName>
    <alternativeName>
        <fullName evidence="1">ATase</fullName>
    </alternativeName>
    <domain>
        <recommendedName>
            <fullName evidence="1">Glutamine synthetase adenylyl-L-tyrosine phosphorylase</fullName>
            <ecNumber evidence="1">2.7.7.89</ecNumber>
        </recommendedName>
        <alternativeName>
            <fullName evidence="1">Adenylyl removase</fullName>
            <shortName evidence="1">AR</shortName>
            <shortName evidence="1">AT-N</shortName>
        </alternativeName>
    </domain>
    <domain>
        <recommendedName>
            <fullName evidence="1">Glutamine synthetase adenylyl transferase</fullName>
            <ecNumber evidence="1">2.7.7.42</ecNumber>
        </recommendedName>
        <alternativeName>
            <fullName evidence="1">Adenylyl transferase</fullName>
            <shortName evidence="1">AT</shortName>
            <shortName evidence="1">AT-C</shortName>
        </alternativeName>
    </domain>
</protein>
<name>GLNE_NITOC</name>
<sequence>MNWQANIHKLPALLQGRLKNDLARFQEALEQKNLDTVFKAKTLKTLCLVWGASEFVATNCIRWPSLLLDLQGSGNLFRAYEPNHYVKSLAQQLTNISTETELMVVLRRFRQREMVRIVWRDLAGWASLDEVFRELSQLAEACLNSALACLHYWQSQALGTPYGSISGKPQSMVVLGMGKLGARELNLSSDIDLIFAYPESGETRGAQRTLNNEEYFIRLARRLIRVLDERTEEGFVFRVDMRLRPDGDSGPLVASFNAMENYYQNQGRDWERYAMIKARVVAGDCQAGTRLMAMLRPFSYRRYLDFGAIESLRSMKAMIAQELRRQGIKANIKLGPGGIREVEFIGQSFQLIRGGRESALQERGILRVLTLLAERDHLPYYAKEELCAAYVFLRRVEHRLQAYRDEQTHDLPTSTEGRVRLAFAMGYRDWEAFASALEEHRRRVQEHFEQLFAAPHMDITDQMAQEKRLAEVWLGGELREASLAVLSAAGYRAPEEAVQTLMYLRQSYTVRALSAQARIRLDRLMPLLLGAVGRTEYPEQCLQRVIILLETVAQRTAYLALLAEYPMALSQLVKLCAASPLIARQLTRYPLLLDELLDPRSLYQVLGYDSLAEDLKWSLESIPGDDLEQQMELLRHFCQRQTLRVAAADVTGVLPLMKVGDHLTYLAEVILKKALELSWRHLVHRHGRLQSSTGEQPEESGFAVIGYGKLGGYELGYGSDLDLVFLHNAKPGDPPSEGKKPLDPVVFYSRLGQRLIHILQTSTPSGKLYEVDTRLRPSGVSGLLVSGLDAYRGYQCMQAWTWEHQALVRARFVAGDARLGAAFTAMRQEILGRQRDPIKLRDEVRHMRAKMRNQLDRSQGGWFDLKQGRGGIADIEFIVQYGVLAWAHAHPQLLEYPDNIRILEGFAQAGLLASEESQLLADAYRAYRAAANRLNLQTHEARVEEGQFRQERIAVQQLWSALLEDESAK</sequence>
<comment type="function">
    <text evidence="1">Involved in the regulation of glutamine synthetase GlnA, a key enzyme in the process to assimilate ammonia. When cellular nitrogen levels are high, the C-terminal adenylyl transferase (AT) inactivates GlnA by covalent transfer of an adenylyl group from ATP to specific tyrosine residue of GlnA, thus reducing its activity. Conversely, when nitrogen levels are low, the N-terminal adenylyl removase (AR) activates GlnA by removing the adenylyl group by phosphorolysis, increasing its activity. The regulatory region of GlnE binds the signal transduction protein PII (GlnB) which indicates the nitrogen status of the cell.</text>
</comment>
<comment type="catalytic activity">
    <reaction evidence="1">
        <text>[glutamine synthetase]-O(4)-(5'-adenylyl)-L-tyrosine + phosphate = [glutamine synthetase]-L-tyrosine + ADP</text>
        <dbReference type="Rhea" id="RHEA:43716"/>
        <dbReference type="Rhea" id="RHEA-COMP:10660"/>
        <dbReference type="Rhea" id="RHEA-COMP:10661"/>
        <dbReference type="ChEBI" id="CHEBI:43474"/>
        <dbReference type="ChEBI" id="CHEBI:46858"/>
        <dbReference type="ChEBI" id="CHEBI:83624"/>
        <dbReference type="ChEBI" id="CHEBI:456216"/>
        <dbReference type="EC" id="2.7.7.89"/>
    </reaction>
</comment>
<comment type="catalytic activity">
    <reaction evidence="1">
        <text>[glutamine synthetase]-L-tyrosine + ATP = [glutamine synthetase]-O(4)-(5'-adenylyl)-L-tyrosine + diphosphate</text>
        <dbReference type="Rhea" id="RHEA:18589"/>
        <dbReference type="Rhea" id="RHEA-COMP:10660"/>
        <dbReference type="Rhea" id="RHEA-COMP:10661"/>
        <dbReference type="ChEBI" id="CHEBI:30616"/>
        <dbReference type="ChEBI" id="CHEBI:33019"/>
        <dbReference type="ChEBI" id="CHEBI:46858"/>
        <dbReference type="ChEBI" id="CHEBI:83624"/>
        <dbReference type="EC" id="2.7.7.42"/>
    </reaction>
</comment>
<comment type="cofactor">
    <cofactor evidence="1">
        <name>Mg(2+)</name>
        <dbReference type="ChEBI" id="CHEBI:18420"/>
    </cofactor>
</comment>
<comment type="similarity">
    <text evidence="1">Belongs to the GlnE family.</text>
</comment>
<organism>
    <name type="scientific">Nitrosococcus oceani (strain ATCC 19707 / BCRC 17464 / JCM 30415 / NCIMB 11848 / C-107)</name>
    <dbReference type="NCBI Taxonomy" id="323261"/>
    <lineage>
        <taxon>Bacteria</taxon>
        <taxon>Pseudomonadati</taxon>
        <taxon>Pseudomonadota</taxon>
        <taxon>Gammaproteobacteria</taxon>
        <taxon>Chromatiales</taxon>
        <taxon>Chromatiaceae</taxon>
        <taxon>Nitrosococcus</taxon>
    </lineage>
</organism>
<dbReference type="EC" id="2.7.7.89" evidence="1"/>
<dbReference type="EC" id="2.7.7.42" evidence="1"/>
<dbReference type="EMBL" id="CP000127">
    <property type="protein sequence ID" value="ABA56668.1"/>
    <property type="molecule type" value="Genomic_DNA"/>
</dbReference>
<dbReference type="RefSeq" id="WP_002813656.1">
    <property type="nucleotide sequence ID" value="NC_007484.1"/>
</dbReference>
<dbReference type="SMR" id="Q3JES8"/>
<dbReference type="FunCoup" id="Q3JES8">
    <property type="interactions" value="204"/>
</dbReference>
<dbReference type="STRING" id="323261.Noc_0135"/>
<dbReference type="KEGG" id="noc:Noc_0135"/>
<dbReference type="eggNOG" id="COG1391">
    <property type="taxonomic scope" value="Bacteria"/>
</dbReference>
<dbReference type="HOGENOM" id="CLU_006233_0_1_6"/>
<dbReference type="InParanoid" id="Q3JES8"/>
<dbReference type="Proteomes" id="UP000006838">
    <property type="component" value="Chromosome"/>
</dbReference>
<dbReference type="GO" id="GO:0005829">
    <property type="term" value="C:cytosol"/>
    <property type="evidence" value="ECO:0007669"/>
    <property type="project" value="TreeGrafter"/>
</dbReference>
<dbReference type="GO" id="GO:0008882">
    <property type="term" value="F:[glutamate-ammonia-ligase] adenylyltransferase activity"/>
    <property type="evidence" value="ECO:0007669"/>
    <property type="project" value="UniProtKB-UniRule"/>
</dbReference>
<dbReference type="GO" id="GO:0047388">
    <property type="term" value="F:[glutamine synthetase]-adenylyl-L-tyrosine phosphorylase activity"/>
    <property type="evidence" value="ECO:0007669"/>
    <property type="project" value="UniProtKB-EC"/>
</dbReference>
<dbReference type="GO" id="GO:0005524">
    <property type="term" value="F:ATP binding"/>
    <property type="evidence" value="ECO:0007669"/>
    <property type="project" value="UniProtKB-UniRule"/>
</dbReference>
<dbReference type="GO" id="GO:0000287">
    <property type="term" value="F:magnesium ion binding"/>
    <property type="evidence" value="ECO:0007669"/>
    <property type="project" value="UniProtKB-UniRule"/>
</dbReference>
<dbReference type="GO" id="GO:0000820">
    <property type="term" value="P:regulation of glutamine family amino acid metabolic process"/>
    <property type="evidence" value="ECO:0007669"/>
    <property type="project" value="UniProtKB-UniRule"/>
</dbReference>
<dbReference type="CDD" id="cd05401">
    <property type="entry name" value="NT_GlnE_GlnD_like"/>
    <property type="match status" value="2"/>
</dbReference>
<dbReference type="FunFam" id="1.20.120.330:FF:000005">
    <property type="entry name" value="Bifunctional glutamine synthetase adenylyltransferase/adenylyl-removing enzyme"/>
    <property type="match status" value="1"/>
</dbReference>
<dbReference type="FunFam" id="3.30.460.10:FF:000009">
    <property type="entry name" value="Bifunctional glutamine synthetase adenylyltransferase/adenylyl-removing enzyme"/>
    <property type="match status" value="2"/>
</dbReference>
<dbReference type="Gene3D" id="1.20.120.1510">
    <property type="match status" value="1"/>
</dbReference>
<dbReference type="Gene3D" id="3.30.460.10">
    <property type="entry name" value="Beta Polymerase, domain 2"/>
    <property type="match status" value="2"/>
</dbReference>
<dbReference type="Gene3D" id="1.10.4050.10">
    <property type="entry name" value="Glutamine synthase adenylyltransferase GlnE"/>
    <property type="match status" value="1"/>
</dbReference>
<dbReference type="Gene3D" id="1.20.120.330">
    <property type="entry name" value="Nucleotidyltransferases domain 2"/>
    <property type="match status" value="2"/>
</dbReference>
<dbReference type="HAMAP" id="MF_00802">
    <property type="entry name" value="GlnE"/>
    <property type="match status" value="1"/>
</dbReference>
<dbReference type="InterPro" id="IPR023057">
    <property type="entry name" value="GlnE"/>
</dbReference>
<dbReference type="InterPro" id="IPR005190">
    <property type="entry name" value="GlnE_rpt_dom"/>
</dbReference>
<dbReference type="InterPro" id="IPR043519">
    <property type="entry name" value="NT_sf"/>
</dbReference>
<dbReference type="InterPro" id="IPR013546">
    <property type="entry name" value="PII_UdlTrfase/GS_AdlTrfase"/>
</dbReference>
<dbReference type="NCBIfam" id="NF008292">
    <property type="entry name" value="PRK11072.1"/>
    <property type="match status" value="1"/>
</dbReference>
<dbReference type="PANTHER" id="PTHR30621:SF0">
    <property type="entry name" value="BIFUNCTIONAL GLUTAMINE SYNTHETASE ADENYLYLTRANSFERASE_ADENYLYL-REMOVING ENZYME"/>
    <property type="match status" value="1"/>
</dbReference>
<dbReference type="PANTHER" id="PTHR30621">
    <property type="entry name" value="GLUTAMINE SYNTHETASE ADENYLYLTRANSFERASE"/>
    <property type="match status" value="1"/>
</dbReference>
<dbReference type="Pfam" id="PF08335">
    <property type="entry name" value="GlnD_UR_UTase"/>
    <property type="match status" value="2"/>
</dbReference>
<dbReference type="Pfam" id="PF03710">
    <property type="entry name" value="GlnE"/>
    <property type="match status" value="2"/>
</dbReference>
<dbReference type="SUPFAM" id="SSF81301">
    <property type="entry name" value="Nucleotidyltransferase"/>
    <property type="match status" value="2"/>
</dbReference>
<dbReference type="SUPFAM" id="SSF81593">
    <property type="entry name" value="Nucleotidyltransferase substrate binding subunit/domain"/>
    <property type="match status" value="2"/>
</dbReference>
<evidence type="ECO:0000255" key="1">
    <source>
        <dbReference type="HAMAP-Rule" id="MF_00802"/>
    </source>
</evidence>